<name>CYAY_BURO0</name>
<reference key="1">
    <citation type="submission" date="2008-02" db="EMBL/GenBank/DDBJ databases">
        <title>Complete sequence of chromosome 1 of Burkholderia cenocepacia MC0-3.</title>
        <authorList>
            <person name="Copeland A."/>
            <person name="Lucas S."/>
            <person name="Lapidus A."/>
            <person name="Barry K."/>
            <person name="Bruce D."/>
            <person name="Goodwin L."/>
            <person name="Glavina del Rio T."/>
            <person name="Dalin E."/>
            <person name="Tice H."/>
            <person name="Pitluck S."/>
            <person name="Chain P."/>
            <person name="Malfatti S."/>
            <person name="Shin M."/>
            <person name="Vergez L."/>
            <person name="Schmutz J."/>
            <person name="Larimer F."/>
            <person name="Land M."/>
            <person name="Hauser L."/>
            <person name="Kyrpides N."/>
            <person name="Mikhailova N."/>
            <person name="Tiedje J."/>
            <person name="Richardson P."/>
        </authorList>
    </citation>
    <scope>NUCLEOTIDE SEQUENCE [LARGE SCALE GENOMIC DNA]</scope>
    <source>
        <strain>MC0-3</strain>
    </source>
</reference>
<proteinExistence type="inferred from homology"/>
<keyword id="KW-0408">Iron</keyword>
<keyword id="KW-0479">Metal-binding</keyword>
<dbReference type="EMBL" id="CP000958">
    <property type="protein sequence ID" value="ACA89545.1"/>
    <property type="molecule type" value="Genomic_DNA"/>
</dbReference>
<dbReference type="RefSeq" id="WP_011546634.1">
    <property type="nucleotide sequence ID" value="NC_010508.1"/>
</dbReference>
<dbReference type="SMR" id="B1JU60"/>
<dbReference type="GeneID" id="83047169"/>
<dbReference type="KEGG" id="bcm:Bcenmc03_0365"/>
<dbReference type="HOGENOM" id="CLU_080880_3_0_4"/>
<dbReference type="Proteomes" id="UP000002169">
    <property type="component" value="Chromosome 1"/>
</dbReference>
<dbReference type="GO" id="GO:0005829">
    <property type="term" value="C:cytosol"/>
    <property type="evidence" value="ECO:0007669"/>
    <property type="project" value="TreeGrafter"/>
</dbReference>
<dbReference type="GO" id="GO:0008199">
    <property type="term" value="F:ferric iron binding"/>
    <property type="evidence" value="ECO:0007669"/>
    <property type="project" value="InterPro"/>
</dbReference>
<dbReference type="GO" id="GO:0008198">
    <property type="term" value="F:ferrous iron binding"/>
    <property type="evidence" value="ECO:0007669"/>
    <property type="project" value="TreeGrafter"/>
</dbReference>
<dbReference type="GO" id="GO:0016226">
    <property type="term" value="P:iron-sulfur cluster assembly"/>
    <property type="evidence" value="ECO:0007669"/>
    <property type="project" value="UniProtKB-UniRule"/>
</dbReference>
<dbReference type="CDD" id="cd00503">
    <property type="entry name" value="Frataxin"/>
    <property type="match status" value="1"/>
</dbReference>
<dbReference type="Gene3D" id="3.30.920.10">
    <property type="entry name" value="Frataxin/CyaY"/>
    <property type="match status" value="1"/>
</dbReference>
<dbReference type="HAMAP" id="MF_00142">
    <property type="entry name" value="CyaY"/>
    <property type="match status" value="1"/>
</dbReference>
<dbReference type="InterPro" id="IPR047584">
    <property type="entry name" value="CyaY"/>
</dbReference>
<dbReference type="InterPro" id="IPR002908">
    <property type="entry name" value="Frataxin/CyaY"/>
</dbReference>
<dbReference type="InterPro" id="IPR036524">
    <property type="entry name" value="Frataxin/CyaY_sf"/>
</dbReference>
<dbReference type="InterPro" id="IPR020895">
    <property type="entry name" value="Frataxin_CS"/>
</dbReference>
<dbReference type="NCBIfam" id="TIGR03421">
    <property type="entry name" value="FeS_CyaY"/>
    <property type="match status" value="1"/>
</dbReference>
<dbReference type="PANTHER" id="PTHR16821">
    <property type="entry name" value="FRATAXIN"/>
    <property type="match status" value="1"/>
</dbReference>
<dbReference type="PANTHER" id="PTHR16821:SF2">
    <property type="entry name" value="FRATAXIN, MITOCHONDRIAL"/>
    <property type="match status" value="1"/>
</dbReference>
<dbReference type="Pfam" id="PF01491">
    <property type="entry name" value="Frataxin_Cyay"/>
    <property type="match status" value="1"/>
</dbReference>
<dbReference type="SMART" id="SM01219">
    <property type="entry name" value="Frataxin_Cyay"/>
    <property type="match status" value="1"/>
</dbReference>
<dbReference type="SUPFAM" id="SSF55387">
    <property type="entry name" value="Frataxin/Nqo15-like"/>
    <property type="match status" value="1"/>
</dbReference>
<dbReference type="PROSITE" id="PS01344">
    <property type="entry name" value="FRATAXIN_1"/>
    <property type="match status" value="1"/>
</dbReference>
<dbReference type="PROSITE" id="PS50810">
    <property type="entry name" value="FRATAXIN_2"/>
    <property type="match status" value="1"/>
</dbReference>
<gene>
    <name evidence="1" type="primary">cyaY</name>
    <name type="ordered locus">Bcenmc03_0365</name>
</gene>
<feature type="chain" id="PRO_1000096236" description="Iron-sulfur cluster assembly protein CyaY">
    <location>
        <begin position="1"/>
        <end position="108"/>
    </location>
</feature>
<protein>
    <recommendedName>
        <fullName evidence="1">Iron-sulfur cluster assembly protein CyaY</fullName>
    </recommendedName>
</protein>
<accession>B1JU60</accession>
<sequence>MSDTEYLARAEAVLAAVERTVDVANDGDHDIDLERNGSVLTLTFENGSKIIVNLQPPMKEVWIAAKAGGFHYRFIDGEWRDTRTGTEFFSALTEYATQQAGLPITFSA</sequence>
<evidence type="ECO:0000255" key="1">
    <source>
        <dbReference type="HAMAP-Rule" id="MF_00142"/>
    </source>
</evidence>
<comment type="function">
    <text evidence="1">Involved in iron-sulfur (Fe-S) cluster assembly. May act as a regulator of Fe-S biogenesis.</text>
</comment>
<comment type="similarity">
    <text evidence="1">Belongs to the frataxin family.</text>
</comment>
<organism>
    <name type="scientific">Burkholderia orbicola (strain MC0-3)</name>
    <dbReference type="NCBI Taxonomy" id="406425"/>
    <lineage>
        <taxon>Bacteria</taxon>
        <taxon>Pseudomonadati</taxon>
        <taxon>Pseudomonadota</taxon>
        <taxon>Betaproteobacteria</taxon>
        <taxon>Burkholderiales</taxon>
        <taxon>Burkholderiaceae</taxon>
        <taxon>Burkholderia</taxon>
        <taxon>Burkholderia cepacia complex</taxon>
        <taxon>Burkholderia orbicola</taxon>
    </lineage>
</organism>